<sequence>MSPCENDTPINWKRNLIVAWLGCFLTGAAFSLVMPFLPLYVEQLGVTGHSALNMWSGIVFSITFLFSAIASPFWGGLADRKGRKLMLLRSALGMGIVMVLMGLAQNIWQFLILRALLGLLGGFVPNANALIATQVPRNKSGWALGTLSTGGVSGALLGPMAGGLLADSYGLRPVFFITASVLILCFFVTLFCIREKFQPVSKKEMLHMREVVTSLKKPKLVLSLFVTTLIIQVATGSIAPILTLYVRELAGNVSNVAFISGMIASVPGVAALLSAPRLGKLGDRIGPEKILITALIFSVLLLIPMSYVQTPLQLGILRFLLGAADGALLPAVQTLLVYNSSNQIAGRIFSYNQSFRDIGNVTGPLMGAAISANYGFRAVFLVTAGVVLFNAVYSWNSLRRRRIPQVSN</sequence>
<protein>
    <recommendedName>
        <fullName evidence="1">Multidrug resistance protein MdtG</fullName>
    </recommendedName>
</protein>
<keyword id="KW-0046">Antibiotic resistance</keyword>
<keyword id="KW-0997">Cell inner membrane</keyword>
<keyword id="KW-1003">Cell membrane</keyword>
<keyword id="KW-0472">Membrane</keyword>
<keyword id="KW-0812">Transmembrane</keyword>
<keyword id="KW-1133">Transmembrane helix</keyword>
<keyword id="KW-0813">Transport</keyword>
<evidence type="ECO:0000255" key="1">
    <source>
        <dbReference type="HAMAP-Rule" id="MF_01528"/>
    </source>
</evidence>
<dbReference type="EMBL" id="CU928163">
    <property type="protein sequence ID" value="CAR12438.1"/>
    <property type="molecule type" value="Genomic_DNA"/>
</dbReference>
<dbReference type="RefSeq" id="WP_000074163.1">
    <property type="nucleotide sequence ID" value="NC_011751.1"/>
</dbReference>
<dbReference type="RefSeq" id="YP_002411981.1">
    <property type="nucleotide sequence ID" value="NC_011751.1"/>
</dbReference>
<dbReference type="SMR" id="B7NAS9"/>
<dbReference type="STRING" id="585056.ECUMN_1228"/>
<dbReference type="KEGG" id="eum:ECUMN_1228"/>
<dbReference type="PATRIC" id="fig|585056.7.peg.1430"/>
<dbReference type="HOGENOM" id="CLU_001265_57_3_6"/>
<dbReference type="Proteomes" id="UP000007097">
    <property type="component" value="Chromosome"/>
</dbReference>
<dbReference type="GO" id="GO:0005886">
    <property type="term" value="C:plasma membrane"/>
    <property type="evidence" value="ECO:0007669"/>
    <property type="project" value="UniProtKB-SubCell"/>
</dbReference>
<dbReference type="GO" id="GO:0022857">
    <property type="term" value="F:transmembrane transporter activity"/>
    <property type="evidence" value="ECO:0007669"/>
    <property type="project" value="UniProtKB-UniRule"/>
</dbReference>
<dbReference type="GO" id="GO:0046677">
    <property type="term" value="P:response to antibiotic"/>
    <property type="evidence" value="ECO:0007669"/>
    <property type="project" value="UniProtKB-KW"/>
</dbReference>
<dbReference type="CDD" id="cd17391">
    <property type="entry name" value="MFS_MdtG_MDR_like"/>
    <property type="match status" value="1"/>
</dbReference>
<dbReference type="FunFam" id="1.20.1250.20:FF:000020">
    <property type="entry name" value="Multidrug resistance protein MdtG"/>
    <property type="match status" value="1"/>
</dbReference>
<dbReference type="FunFam" id="1.20.1250.20:FF:000022">
    <property type="entry name" value="Multidrug resistance protein MdtG"/>
    <property type="match status" value="1"/>
</dbReference>
<dbReference type="Gene3D" id="1.20.1250.20">
    <property type="entry name" value="MFS general substrate transporter like domains"/>
    <property type="match status" value="2"/>
</dbReference>
<dbReference type="HAMAP" id="MF_01528">
    <property type="entry name" value="MFS_MdtG"/>
    <property type="match status" value="1"/>
</dbReference>
<dbReference type="InterPro" id="IPR011701">
    <property type="entry name" value="MFS"/>
</dbReference>
<dbReference type="InterPro" id="IPR020846">
    <property type="entry name" value="MFS_dom"/>
</dbReference>
<dbReference type="InterPro" id="IPR050497">
    <property type="entry name" value="MFS_MdtG_subfamily"/>
</dbReference>
<dbReference type="InterPro" id="IPR036259">
    <property type="entry name" value="MFS_trans_sf"/>
</dbReference>
<dbReference type="InterPro" id="IPR023692">
    <property type="entry name" value="Mutidrug-R_MdtG"/>
</dbReference>
<dbReference type="InterPro" id="IPR001958">
    <property type="entry name" value="Tet-R_TetA/multi-R_MdtG-like"/>
</dbReference>
<dbReference type="NCBIfam" id="NF007372">
    <property type="entry name" value="PRK09874.1"/>
    <property type="match status" value="1"/>
</dbReference>
<dbReference type="PANTHER" id="PTHR43414">
    <property type="entry name" value="MULTIDRUG RESISTANCE PROTEIN MDTG"/>
    <property type="match status" value="1"/>
</dbReference>
<dbReference type="PANTHER" id="PTHR43414:SF6">
    <property type="entry name" value="MULTIDRUG RESISTANCE PROTEIN MDTG"/>
    <property type="match status" value="1"/>
</dbReference>
<dbReference type="Pfam" id="PF07690">
    <property type="entry name" value="MFS_1"/>
    <property type="match status" value="1"/>
</dbReference>
<dbReference type="PRINTS" id="PR01035">
    <property type="entry name" value="TCRTETA"/>
</dbReference>
<dbReference type="SUPFAM" id="SSF103473">
    <property type="entry name" value="MFS general substrate transporter"/>
    <property type="match status" value="1"/>
</dbReference>
<dbReference type="PROSITE" id="PS50850">
    <property type="entry name" value="MFS"/>
    <property type="match status" value="1"/>
</dbReference>
<accession>B7NAS9</accession>
<comment type="function">
    <text evidence="1">Confers resistance to fosfomycin and deoxycholate.</text>
</comment>
<comment type="subcellular location">
    <subcellularLocation>
        <location evidence="1">Cell inner membrane</location>
        <topology evidence="1">Multi-pass membrane protein</topology>
    </subcellularLocation>
</comment>
<comment type="similarity">
    <text evidence="1">Belongs to the major facilitator superfamily. DHA1 family. MdtG (TC 2.A.1.2.20) subfamily.</text>
</comment>
<proteinExistence type="inferred from homology"/>
<gene>
    <name evidence="1" type="primary">mdtG</name>
    <name type="ordered locus">ECUMN_1228</name>
</gene>
<name>MDTG_ECOLU</name>
<reference key="1">
    <citation type="journal article" date="2009" name="PLoS Genet.">
        <title>Organised genome dynamics in the Escherichia coli species results in highly diverse adaptive paths.</title>
        <authorList>
            <person name="Touchon M."/>
            <person name="Hoede C."/>
            <person name="Tenaillon O."/>
            <person name="Barbe V."/>
            <person name="Baeriswyl S."/>
            <person name="Bidet P."/>
            <person name="Bingen E."/>
            <person name="Bonacorsi S."/>
            <person name="Bouchier C."/>
            <person name="Bouvet O."/>
            <person name="Calteau A."/>
            <person name="Chiapello H."/>
            <person name="Clermont O."/>
            <person name="Cruveiller S."/>
            <person name="Danchin A."/>
            <person name="Diard M."/>
            <person name="Dossat C."/>
            <person name="Karoui M.E."/>
            <person name="Frapy E."/>
            <person name="Garry L."/>
            <person name="Ghigo J.M."/>
            <person name="Gilles A.M."/>
            <person name="Johnson J."/>
            <person name="Le Bouguenec C."/>
            <person name="Lescat M."/>
            <person name="Mangenot S."/>
            <person name="Martinez-Jehanne V."/>
            <person name="Matic I."/>
            <person name="Nassif X."/>
            <person name="Oztas S."/>
            <person name="Petit M.A."/>
            <person name="Pichon C."/>
            <person name="Rouy Z."/>
            <person name="Ruf C.S."/>
            <person name="Schneider D."/>
            <person name="Tourret J."/>
            <person name="Vacherie B."/>
            <person name="Vallenet D."/>
            <person name="Medigue C."/>
            <person name="Rocha E.P.C."/>
            <person name="Denamur E."/>
        </authorList>
    </citation>
    <scope>NUCLEOTIDE SEQUENCE [LARGE SCALE GENOMIC DNA]</scope>
    <source>
        <strain>UMN026 / ExPEC</strain>
    </source>
</reference>
<feature type="chain" id="PRO_1000200782" description="Multidrug resistance protein MdtG">
    <location>
        <begin position="1"/>
        <end position="408"/>
    </location>
</feature>
<feature type="transmembrane region" description="Helical" evidence="1">
    <location>
        <begin position="16"/>
        <end position="36"/>
    </location>
</feature>
<feature type="transmembrane region" description="Helical" evidence="1">
    <location>
        <begin position="58"/>
        <end position="78"/>
    </location>
</feature>
<feature type="transmembrane region" description="Helical" evidence="1">
    <location>
        <begin position="92"/>
        <end position="112"/>
    </location>
</feature>
<feature type="transmembrane region" description="Helical" evidence="1">
    <location>
        <begin position="115"/>
        <end position="135"/>
    </location>
</feature>
<feature type="transmembrane region" description="Helical" evidence="1">
    <location>
        <begin position="146"/>
        <end position="166"/>
    </location>
</feature>
<feature type="transmembrane region" description="Helical" evidence="1">
    <location>
        <begin position="173"/>
        <end position="193"/>
    </location>
</feature>
<feature type="transmembrane region" description="Helical" evidence="1">
    <location>
        <begin position="224"/>
        <end position="244"/>
    </location>
</feature>
<feature type="transmembrane region" description="Helical" evidence="1">
    <location>
        <begin position="256"/>
        <end position="276"/>
    </location>
</feature>
<feature type="transmembrane region" description="Helical" evidence="1">
    <location>
        <begin position="290"/>
        <end position="310"/>
    </location>
</feature>
<feature type="transmembrane region" description="Helical" evidence="1">
    <location>
        <begin position="378"/>
        <end position="398"/>
    </location>
</feature>
<organism>
    <name type="scientific">Escherichia coli O17:K52:H18 (strain UMN026 / ExPEC)</name>
    <dbReference type="NCBI Taxonomy" id="585056"/>
    <lineage>
        <taxon>Bacteria</taxon>
        <taxon>Pseudomonadati</taxon>
        <taxon>Pseudomonadota</taxon>
        <taxon>Gammaproteobacteria</taxon>
        <taxon>Enterobacterales</taxon>
        <taxon>Enterobacteriaceae</taxon>
        <taxon>Escherichia</taxon>
    </lineage>
</organism>